<protein>
    <recommendedName>
        <fullName>Mediator of RNA polymerase II transcription subunit 28</fullName>
    </recommendedName>
    <alternativeName>
        <fullName>Mediator complex subunit 28</fullName>
    </alternativeName>
</protein>
<sequence length="169" mass="18801">MFSAQQPGPPPPNQPGAPAGLMSTPPGAKNPSSTLVDDLESSFEACFASLVSQDYVNGTDQEEIRTGVEQCIQKFLDVARQTECFFLQKRLQLSVQKPEQVIKEDVSELRNELQRKEALIQKHLTKLRSWQQVLEEINGQHKKTSEMPQGPLAYLEQASANIPAPMKPT</sequence>
<comment type="function">
    <text evidence="1">Component of the Mediator complex, a coactivator involved in the regulated transcription of nearly all RNA polymerase II-dependent genes. Mediator functions as a bridge to convey information from gene-specific regulatory proteins to the basal RNA polymerase II transcription machinery. Mediator is recruited to promoters by direct interactions with regulatory proteins and serves as a scaffold for the assembly of a functional preinitiation complex with RNA polymerase II and the general transcription factors (By similarity).</text>
</comment>
<comment type="subunit">
    <text evidence="1">Component of the Mediator complex.</text>
</comment>
<comment type="subcellular location">
    <subcellularLocation>
        <location evidence="4">Nucleus</location>
    </subcellularLocation>
</comment>
<comment type="similarity">
    <text evidence="4">Belongs to the Mediator complex subunit 28 family.</text>
</comment>
<keyword id="KW-0010">Activator</keyword>
<keyword id="KW-0175">Coiled coil</keyword>
<keyword id="KW-0539">Nucleus</keyword>
<keyword id="KW-1185">Reference proteome</keyword>
<keyword id="KW-0804">Transcription</keyword>
<keyword id="KW-0805">Transcription regulation</keyword>
<evidence type="ECO:0000250" key="1"/>
<evidence type="ECO:0000255" key="2"/>
<evidence type="ECO:0000256" key="3">
    <source>
        <dbReference type="SAM" id="MobiDB-lite"/>
    </source>
</evidence>
<evidence type="ECO:0000305" key="4"/>
<organism>
    <name type="scientific">Xenopus tropicalis</name>
    <name type="common">Western clawed frog</name>
    <name type="synonym">Silurana tropicalis</name>
    <dbReference type="NCBI Taxonomy" id="8364"/>
    <lineage>
        <taxon>Eukaryota</taxon>
        <taxon>Metazoa</taxon>
        <taxon>Chordata</taxon>
        <taxon>Craniata</taxon>
        <taxon>Vertebrata</taxon>
        <taxon>Euteleostomi</taxon>
        <taxon>Amphibia</taxon>
        <taxon>Batrachia</taxon>
        <taxon>Anura</taxon>
        <taxon>Pipoidea</taxon>
        <taxon>Pipidae</taxon>
        <taxon>Xenopodinae</taxon>
        <taxon>Xenopus</taxon>
        <taxon>Silurana</taxon>
    </lineage>
</organism>
<dbReference type="EMBL" id="BC136218">
    <property type="protein sequence ID" value="AAI36219.1"/>
    <property type="molecule type" value="mRNA"/>
</dbReference>
<dbReference type="RefSeq" id="NP_001096476.1">
    <property type="nucleotide sequence ID" value="NM_001103006.1"/>
</dbReference>
<dbReference type="SMR" id="A4IIZ9"/>
<dbReference type="FunCoup" id="A4IIZ9">
    <property type="interactions" value="3627"/>
</dbReference>
<dbReference type="STRING" id="8364.ENSXETP00000008585"/>
<dbReference type="PaxDb" id="8364-ENSXETP00000043883"/>
<dbReference type="DNASU" id="100125095"/>
<dbReference type="GeneID" id="100125095"/>
<dbReference type="KEGG" id="xtr:100125095"/>
<dbReference type="AGR" id="Xenbase:XB-GENE-961728"/>
<dbReference type="CTD" id="80306"/>
<dbReference type="Xenbase" id="XB-GENE-961728">
    <property type="gene designation" value="med28"/>
</dbReference>
<dbReference type="eggNOG" id="ENOG502QSN9">
    <property type="taxonomic scope" value="Eukaryota"/>
</dbReference>
<dbReference type="HOGENOM" id="CLU_129063_0_0_1"/>
<dbReference type="InParanoid" id="A4IIZ9"/>
<dbReference type="OMA" id="MQPSPQH"/>
<dbReference type="OrthoDB" id="2286203at2759"/>
<dbReference type="Proteomes" id="UP000008143">
    <property type="component" value="Chromosome 1"/>
</dbReference>
<dbReference type="GO" id="GO:0005634">
    <property type="term" value="C:nucleus"/>
    <property type="evidence" value="ECO:0007669"/>
    <property type="project" value="UniProtKB-SubCell"/>
</dbReference>
<dbReference type="InterPro" id="IPR021640">
    <property type="entry name" value="Mediator_Med28"/>
</dbReference>
<dbReference type="PANTHER" id="PTHR13512">
    <property type="entry name" value="MEDIATOR COMPLEX SUBUNIT 28"/>
    <property type="match status" value="1"/>
</dbReference>
<dbReference type="PANTHER" id="PTHR13512:SF2">
    <property type="entry name" value="MEDIATOR OF RNA POLYMERASE II TRANSCRIPTION SUBUNIT 28"/>
    <property type="match status" value="1"/>
</dbReference>
<dbReference type="Pfam" id="PF11594">
    <property type="entry name" value="Med28"/>
    <property type="match status" value="1"/>
</dbReference>
<accession>A4IIZ9</accession>
<reference key="1">
    <citation type="submission" date="2007-03" db="EMBL/GenBank/DDBJ databases">
        <authorList>
            <consortium name="NIH - Xenopus Gene Collection (XGC) project"/>
        </authorList>
    </citation>
    <scope>NUCLEOTIDE SEQUENCE [LARGE SCALE MRNA]</scope>
    <source>
        <tissue>Brain</tissue>
    </source>
</reference>
<gene>
    <name type="primary">med28</name>
</gene>
<feature type="chain" id="PRO_0000305697" description="Mediator of RNA polymerase II transcription subunit 28">
    <location>
        <begin position="1"/>
        <end position="169"/>
    </location>
</feature>
<feature type="region of interest" description="Disordered" evidence="3">
    <location>
        <begin position="1"/>
        <end position="35"/>
    </location>
</feature>
<feature type="coiled-coil region" evidence="2">
    <location>
        <begin position="99"/>
        <end position="137"/>
    </location>
</feature>
<name>MED28_XENTR</name>
<proteinExistence type="evidence at transcript level"/>